<reference key="1">
    <citation type="journal article" date="2001" name="Nature">
        <title>Genome sequence and gene compaction of the eukaryote parasite Encephalitozoon cuniculi.</title>
        <authorList>
            <person name="Katinka M.D."/>
            <person name="Duprat S."/>
            <person name="Cornillot E."/>
            <person name="Metenier G."/>
            <person name="Thomarat F."/>
            <person name="Prensier G."/>
            <person name="Barbe V."/>
            <person name="Peyretaillade E."/>
            <person name="Brottier P."/>
            <person name="Wincker P."/>
            <person name="Delbac F."/>
            <person name="El Alaoui H."/>
            <person name="Peyret P."/>
            <person name="Saurin W."/>
            <person name="Gouy M."/>
            <person name="Weissenbach J."/>
            <person name="Vivares C.P."/>
        </authorList>
    </citation>
    <scope>NUCLEOTIDE SEQUENCE [LARGE SCALE GENOMIC DNA]</scope>
    <source>
        <strain>GB-M1</strain>
    </source>
</reference>
<reference key="2">
    <citation type="journal article" date="2009" name="BMC Genomics">
        <title>Identification of transcriptional signals in Encephalitozoon cuniculi widespread among Microsporidia phylum: support for accurate structural genome annotation.</title>
        <authorList>
            <person name="Peyretaillade E."/>
            <person name="Goncalves O."/>
            <person name="Terrat S."/>
            <person name="Dugat-Bony E."/>
            <person name="Wincker P."/>
            <person name="Cornman R.S."/>
            <person name="Evans J.D."/>
            <person name="Delbac F."/>
            <person name="Peyret P."/>
        </authorList>
    </citation>
    <scope>GENOME REANNOTATION</scope>
    <source>
        <strain>GB-M1</strain>
    </source>
</reference>
<organism>
    <name type="scientific">Encephalitozoon cuniculi (strain GB-M1)</name>
    <name type="common">Microsporidian parasite</name>
    <dbReference type="NCBI Taxonomy" id="284813"/>
    <lineage>
        <taxon>Eukaryota</taxon>
        <taxon>Fungi</taxon>
        <taxon>Fungi incertae sedis</taxon>
        <taxon>Microsporidia</taxon>
        <taxon>Unikaryonidae</taxon>
        <taxon>Encephalitozoon</taxon>
    </lineage>
</organism>
<gene>
    <name type="ordered locus">ECU04_1490</name>
</gene>
<dbReference type="EMBL" id="AL590444">
    <property type="protein sequence ID" value="CAD25338.2"/>
    <property type="molecule type" value="Genomic_DNA"/>
</dbReference>
<dbReference type="RefSeq" id="NP_584834.2">
    <property type="nucleotide sequence ID" value="NM_001041184.2"/>
</dbReference>
<dbReference type="SMR" id="Q8SVQ8"/>
<dbReference type="STRING" id="284813.Q8SVQ8"/>
<dbReference type="GeneID" id="858982"/>
<dbReference type="KEGG" id="ecu:ECU04_1490"/>
<dbReference type="VEuPathDB" id="MicrosporidiaDB:ECU04_1490"/>
<dbReference type="HOGENOM" id="CLU_573756_0_0_1"/>
<dbReference type="InParanoid" id="Q8SVQ8"/>
<dbReference type="OrthoDB" id="14421at2759"/>
<dbReference type="Proteomes" id="UP000000819">
    <property type="component" value="Chromosome IV"/>
</dbReference>
<dbReference type="Gene3D" id="2.130.10.10">
    <property type="entry name" value="YVTN repeat-like/Quinoprotein amine dehydrogenase"/>
    <property type="match status" value="1"/>
</dbReference>
<dbReference type="InterPro" id="IPR006594">
    <property type="entry name" value="LisH"/>
</dbReference>
<dbReference type="InterPro" id="IPR015943">
    <property type="entry name" value="WD40/YVTN_repeat-like_dom_sf"/>
</dbReference>
<dbReference type="InterPro" id="IPR036322">
    <property type="entry name" value="WD40_repeat_dom_sf"/>
</dbReference>
<dbReference type="Pfam" id="PF08513">
    <property type="entry name" value="LisH"/>
    <property type="match status" value="1"/>
</dbReference>
<dbReference type="SUPFAM" id="SSF50978">
    <property type="entry name" value="WD40 repeat-like"/>
    <property type="match status" value="1"/>
</dbReference>
<dbReference type="PROSITE" id="PS50896">
    <property type="entry name" value="LISH"/>
    <property type="match status" value="1"/>
</dbReference>
<keyword id="KW-1185">Reference proteome</keyword>
<proteinExistence type="predicted"/>
<name>Y4E9_ENCCU</name>
<feature type="chain" id="PRO_0000388434" description="Uncharacterized LisH domain-containing protein ECU04_1490">
    <location>
        <begin position="1"/>
        <end position="511"/>
    </location>
</feature>
<feature type="domain" description="LisH" evidence="1">
    <location>
        <begin position="13"/>
        <end position="45"/>
    </location>
</feature>
<feature type="region of interest" description="Disordered" evidence="2">
    <location>
        <begin position="172"/>
        <end position="212"/>
    </location>
</feature>
<feature type="compositionally biased region" description="Polar residues" evidence="2">
    <location>
        <begin position="197"/>
        <end position="210"/>
    </location>
</feature>
<sequence length="511" mass="57259">MGDHTYKKKDSGIYDALNMLVYDYLLKMKYEGSAKIFFNEAGLENFKPGEGMPILAQWYAAFHDISAVRSGLSSNLQDLNRIEGIMMKLENEKRRYQHIGRIDPGAMGYGGTVDPYKQYPMYYQQFDQRKMYEMYGQMSPTADATPRFYDPRKGSMPGPGYRAAQGYPRYHPRFEEQGVPPAKMAPKQFRDEGRSGNVESPSIATNQEGSSPLFESVLGGGDRQFGLKEVMLFVPSEHTAVCSAVAGEHKILLVASSNKTITAVNLLSGKNESTVETDEKQVVEMKIREYEDEIIVVCGIADNELLLVRCTMKGSANLEIAGILRGHTASIVSFEVLDSIHSLDSGGIMRKWTLNGVFEREEVLSGEILHICCISEDNFMFADRQRVYVYDFELNIEMMEILKGQALGIKRIKDGFIVVFRNQAIWLDKRIQKVKVLNVNESIRTATLIDGDLVAASSQNVWFDNGKSLAKIKLHETGIVALDGVNVFRKPSVISCSASGECKIWIKYVGD</sequence>
<protein>
    <recommendedName>
        <fullName>Uncharacterized LisH domain-containing protein ECU04_1490</fullName>
    </recommendedName>
</protein>
<evidence type="ECO:0000255" key="1">
    <source>
        <dbReference type="PROSITE-ProRule" id="PRU00126"/>
    </source>
</evidence>
<evidence type="ECO:0000256" key="2">
    <source>
        <dbReference type="SAM" id="MobiDB-lite"/>
    </source>
</evidence>
<accession>Q8SVQ8</accession>